<gene>
    <name evidence="1" type="primary">hemE</name>
    <name type="ordered locus">NGR_c33490</name>
</gene>
<organism>
    <name type="scientific">Sinorhizobium fredii (strain NBRC 101917 / NGR234)</name>
    <dbReference type="NCBI Taxonomy" id="394"/>
    <lineage>
        <taxon>Bacteria</taxon>
        <taxon>Pseudomonadati</taxon>
        <taxon>Pseudomonadota</taxon>
        <taxon>Alphaproteobacteria</taxon>
        <taxon>Hyphomicrobiales</taxon>
        <taxon>Rhizobiaceae</taxon>
        <taxon>Sinorhizobium/Ensifer group</taxon>
        <taxon>Sinorhizobium</taxon>
    </lineage>
</organism>
<proteinExistence type="inferred from homology"/>
<name>DCUP_SINFN</name>
<evidence type="ECO:0000255" key="1">
    <source>
        <dbReference type="HAMAP-Rule" id="MF_00218"/>
    </source>
</evidence>
<keyword id="KW-0963">Cytoplasm</keyword>
<keyword id="KW-0210">Decarboxylase</keyword>
<keyword id="KW-0456">Lyase</keyword>
<keyword id="KW-0627">Porphyrin biosynthesis</keyword>
<keyword id="KW-1185">Reference proteome</keyword>
<protein>
    <recommendedName>
        <fullName evidence="1">Uroporphyrinogen decarboxylase</fullName>
        <shortName evidence="1">UPD</shortName>
        <shortName evidence="1">URO-D</shortName>
        <ecNumber evidence="1">4.1.1.37</ecNumber>
    </recommendedName>
</protein>
<reference key="1">
    <citation type="journal article" date="2009" name="Appl. Environ. Microbiol.">
        <title>Rhizobium sp. strain NGR234 possesses a remarkable number of secretion systems.</title>
        <authorList>
            <person name="Schmeisser C."/>
            <person name="Liesegang H."/>
            <person name="Krysciak D."/>
            <person name="Bakkou N."/>
            <person name="Le Quere A."/>
            <person name="Wollherr A."/>
            <person name="Heinemeyer I."/>
            <person name="Morgenstern B."/>
            <person name="Pommerening-Roeser A."/>
            <person name="Flores M."/>
            <person name="Palacios R."/>
            <person name="Brenner S."/>
            <person name="Gottschalk G."/>
            <person name="Schmitz R.A."/>
            <person name="Broughton W.J."/>
            <person name="Perret X."/>
            <person name="Strittmatter A.W."/>
            <person name="Streit W.R."/>
        </authorList>
    </citation>
    <scope>NUCLEOTIDE SEQUENCE [LARGE SCALE GENOMIC DNA]</scope>
    <source>
        <strain>NBRC 101917 / NGR234</strain>
    </source>
</reference>
<accession>C3MB70</accession>
<comment type="function">
    <text evidence="1">Catalyzes the decarboxylation of four acetate groups of uroporphyrinogen-III to yield coproporphyrinogen-III.</text>
</comment>
<comment type="catalytic activity">
    <reaction evidence="1">
        <text>uroporphyrinogen III + 4 H(+) = coproporphyrinogen III + 4 CO2</text>
        <dbReference type="Rhea" id="RHEA:19865"/>
        <dbReference type="ChEBI" id="CHEBI:15378"/>
        <dbReference type="ChEBI" id="CHEBI:16526"/>
        <dbReference type="ChEBI" id="CHEBI:57308"/>
        <dbReference type="ChEBI" id="CHEBI:57309"/>
        <dbReference type="EC" id="4.1.1.37"/>
    </reaction>
</comment>
<comment type="pathway">
    <text evidence="1">Porphyrin-containing compound metabolism; protoporphyrin-IX biosynthesis; coproporphyrinogen-III from 5-aminolevulinate: step 4/4.</text>
</comment>
<comment type="subunit">
    <text evidence="1">Homodimer.</text>
</comment>
<comment type="subcellular location">
    <subcellularLocation>
        <location evidence="1">Cytoplasm</location>
    </subcellularLocation>
</comment>
<comment type="similarity">
    <text evidence="1">Belongs to the uroporphyrinogen decarboxylase family.</text>
</comment>
<sequence>MAETRRKVLEVLNGKSLTPPPIWLMRQAGRYLPEYRATRAKAGSFLDLCYTPDLAVEVTLQPIRRYAFDAAILFSDILVIPDALHRNVRFEEGHGPRMDPIDTDGIAGLKADGILSHLSPVFETVARLRRELPEETTLLGFCGAPWTVATYMIAGRGTPDQAPARLFAYRHPKAFEELLAFLADVSADYLVAQIDAGADAVQIFDSWAGVLGEDEFARFAVEPVRRMIASVRARRPSAKIIAFAKGAGLLLKDYRRLTGADAIGLDWAVPLAFAAELQKDGPVQGNLDPMRVVAGGGAMESGIDRILDVLGNGPLIFNLGHGITPEADPENVSALVARVRGTKG</sequence>
<dbReference type="EC" id="4.1.1.37" evidence="1"/>
<dbReference type="EMBL" id="CP001389">
    <property type="protein sequence ID" value="ACP27079.1"/>
    <property type="molecule type" value="Genomic_DNA"/>
</dbReference>
<dbReference type="RefSeq" id="WP_012709826.1">
    <property type="nucleotide sequence ID" value="NC_012587.1"/>
</dbReference>
<dbReference type="RefSeq" id="YP_002827832.1">
    <property type="nucleotide sequence ID" value="NC_012587.1"/>
</dbReference>
<dbReference type="SMR" id="C3MB70"/>
<dbReference type="STRING" id="394.NGR_c33490"/>
<dbReference type="KEGG" id="rhi:NGR_c33490"/>
<dbReference type="PATRIC" id="fig|394.7.peg.6194"/>
<dbReference type="eggNOG" id="COG0407">
    <property type="taxonomic scope" value="Bacteria"/>
</dbReference>
<dbReference type="HOGENOM" id="CLU_040933_0_0_5"/>
<dbReference type="OrthoDB" id="9806656at2"/>
<dbReference type="UniPathway" id="UPA00251">
    <property type="reaction ID" value="UER00321"/>
</dbReference>
<dbReference type="Proteomes" id="UP000001054">
    <property type="component" value="Chromosome"/>
</dbReference>
<dbReference type="GO" id="GO:0005829">
    <property type="term" value="C:cytosol"/>
    <property type="evidence" value="ECO:0007669"/>
    <property type="project" value="TreeGrafter"/>
</dbReference>
<dbReference type="GO" id="GO:0004853">
    <property type="term" value="F:uroporphyrinogen decarboxylase activity"/>
    <property type="evidence" value="ECO:0007669"/>
    <property type="project" value="UniProtKB-UniRule"/>
</dbReference>
<dbReference type="GO" id="GO:0019353">
    <property type="term" value="P:protoporphyrinogen IX biosynthetic process from glutamate"/>
    <property type="evidence" value="ECO:0007669"/>
    <property type="project" value="TreeGrafter"/>
</dbReference>
<dbReference type="CDD" id="cd00717">
    <property type="entry name" value="URO-D"/>
    <property type="match status" value="1"/>
</dbReference>
<dbReference type="Gene3D" id="3.20.20.210">
    <property type="match status" value="1"/>
</dbReference>
<dbReference type="HAMAP" id="MF_00218">
    <property type="entry name" value="URO_D"/>
    <property type="match status" value="1"/>
</dbReference>
<dbReference type="InterPro" id="IPR038071">
    <property type="entry name" value="UROD/MetE-like_sf"/>
</dbReference>
<dbReference type="InterPro" id="IPR006361">
    <property type="entry name" value="Uroporphyrinogen_deCO2ase_HemE"/>
</dbReference>
<dbReference type="InterPro" id="IPR000257">
    <property type="entry name" value="Uroporphyrinogen_deCOase"/>
</dbReference>
<dbReference type="NCBIfam" id="TIGR01464">
    <property type="entry name" value="hemE"/>
    <property type="match status" value="1"/>
</dbReference>
<dbReference type="PANTHER" id="PTHR21091">
    <property type="entry name" value="METHYLTETRAHYDROFOLATE:HOMOCYSTEINE METHYLTRANSFERASE RELATED"/>
    <property type="match status" value="1"/>
</dbReference>
<dbReference type="PANTHER" id="PTHR21091:SF169">
    <property type="entry name" value="UROPORPHYRINOGEN DECARBOXYLASE"/>
    <property type="match status" value="1"/>
</dbReference>
<dbReference type="Pfam" id="PF01208">
    <property type="entry name" value="URO-D"/>
    <property type="match status" value="1"/>
</dbReference>
<dbReference type="SUPFAM" id="SSF51726">
    <property type="entry name" value="UROD/MetE-like"/>
    <property type="match status" value="1"/>
</dbReference>
<dbReference type="PROSITE" id="PS00906">
    <property type="entry name" value="UROD_1"/>
    <property type="match status" value="1"/>
</dbReference>
<dbReference type="PROSITE" id="PS00907">
    <property type="entry name" value="UROD_2"/>
    <property type="match status" value="1"/>
</dbReference>
<feature type="chain" id="PRO_1000197534" description="Uroporphyrinogen decarboxylase">
    <location>
        <begin position="1"/>
        <end position="344"/>
    </location>
</feature>
<feature type="binding site" evidence="1">
    <location>
        <begin position="26"/>
        <end position="30"/>
    </location>
    <ligand>
        <name>substrate</name>
    </ligand>
</feature>
<feature type="binding site" evidence="1">
    <location>
        <position position="76"/>
    </location>
    <ligand>
        <name>substrate</name>
    </ligand>
</feature>
<feature type="binding site" evidence="1">
    <location>
        <position position="151"/>
    </location>
    <ligand>
        <name>substrate</name>
    </ligand>
</feature>
<feature type="binding site" evidence="1">
    <location>
        <position position="206"/>
    </location>
    <ligand>
        <name>substrate</name>
    </ligand>
</feature>
<feature type="binding site" evidence="1">
    <location>
        <position position="321"/>
    </location>
    <ligand>
        <name>substrate</name>
    </ligand>
</feature>
<feature type="site" description="Transition state stabilizer" evidence="1">
    <location>
        <position position="76"/>
    </location>
</feature>